<keyword id="KW-0002">3D-structure</keyword>
<keyword id="KW-0560">Oxidoreductase</keyword>
<keyword id="KW-1185">Reference proteome</keyword>
<protein>
    <recommendedName>
        <fullName>Phycoerythrobilin synthase</fullName>
        <ecNumber>1.3.7.6</ecNumber>
    </recommendedName>
    <alternativeName>
        <fullName>(3Z)-phycoerythrobilin:ferredoxin oxidoreductase</fullName>
    </alternativeName>
</protein>
<organismHost>
    <name type="scientific">Prochlorococcus</name>
    <dbReference type="NCBI Taxonomy" id="1218"/>
</organismHost>
<sequence length="233" mass="27256">MTKNPRNNKPKKILDSSYKSKTIWQNYIDALFETFPQLEISEVWAKWDGGNVTKDGGDAKLTANIRTGEHFLKAREAHIVDPNSDIYNTILYPKTGADLPCFGMDLMKFSDKKVIIVFDFQHPREKYLFSVDGLPEDDGKYRFFEMGNHFSKNIFVRYCKPDEVDQYLDTFKLYLTKYKEMIDNNKPVGEDTTVYSDFDTYMTELDPVRGYMKNKFGEGRSEAFVNDFLFSYK</sequence>
<organism>
    <name type="scientific">Prochlorococcus phage P-SSM2</name>
    <dbReference type="NCBI Taxonomy" id="268746"/>
    <lineage>
        <taxon>Viruses</taxon>
        <taxon>Duplodnaviria</taxon>
        <taxon>Heunggongvirae</taxon>
        <taxon>Uroviricota</taxon>
        <taxon>Caudoviricetes</taxon>
        <taxon>Kyanoviridae</taxon>
        <taxon>Salacisavirus</taxon>
        <taxon>Salacisavirus pssm2</taxon>
    </lineage>
</organism>
<comment type="function">
    <text>Plays a role in phycoerythrobilin biosynthesis, the red pigment chromophore photosynthetically active biliproteins of the host cyanobacteria. Uses a four-electron reduction to carry out the reactions catalyzed by two enzymes (EC 1.3.7.2 and EC 1.3.7.3) in host.</text>
</comment>
<comment type="catalytic activity">
    <reaction evidence="1">
        <text>(3Z)-phycoerythrobilin + 2 oxidized 2[4Fe-4S]-[ferredoxin] = biliverdin IXalpha + 2 reduced 2[4Fe-4S]-[ferredoxin] + 4 H(+)</text>
        <dbReference type="Rhea" id="RHEA:25359"/>
        <dbReference type="Rhea" id="RHEA-COMP:10002"/>
        <dbReference type="Rhea" id="RHEA-COMP:10004"/>
        <dbReference type="ChEBI" id="CHEBI:15378"/>
        <dbReference type="ChEBI" id="CHEBI:33722"/>
        <dbReference type="ChEBI" id="CHEBI:33723"/>
        <dbReference type="ChEBI" id="CHEBI:57438"/>
        <dbReference type="ChEBI" id="CHEBI:57991"/>
        <dbReference type="EC" id="1.3.7.6"/>
    </reaction>
</comment>
<comment type="similarity">
    <text evidence="2">Belongs to the HY2 family.</text>
</comment>
<feature type="chain" id="PRO_0000354064" description="Phycoerythrobilin synthase">
    <location>
        <begin position="1"/>
        <end position="233"/>
    </location>
</feature>
<feature type="helix" evidence="4">
    <location>
        <begin position="25"/>
        <end position="34"/>
    </location>
</feature>
<feature type="strand" evidence="4">
    <location>
        <begin position="39"/>
        <end position="49"/>
    </location>
</feature>
<feature type="strand" evidence="4">
    <location>
        <begin position="59"/>
        <end position="68"/>
    </location>
</feature>
<feature type="strand" evidence="4">
    <location>
        <begin position="71"/>
        <end position="81"/>
    </location>
</feature>
<feature type="strand" evidence="4">
    <location>
        <begin position="84"/>
        <end position="93"/>
    </location>
</feature>
<feature type="strand" evidence="4">
    <location>
        <begin position="95"/>
        <end position="97"/>
    </location>
</feature>
<feature type="strand" evidence="4">
    <location>
        <begin position="101"/>
        <end position="110"/>
    </location>
</feature>
<feature type="strand" evidence="4">
    <location>
        <begin position="113"/>
        <end position="121"/>
    </location>
</feature>
<feature type="strand" evidence="4">
    <location>
        <begin position="139"/>
        <end position="141"/>
    </location>
</feature>
<feature type="strand" evidence="3">
    <location>
        <begin position="142"/>
        <end position="144"/>
    </location>
</feature>
<feature type="strand" evidence="3">
    <location>
        <begin position="148"/>
        <end position="150"/>
    </location>
</feature>
<feature type="strand" evidence="4">
    <location>
        <begin position="155"/>
        <end position="159"/>
    </location>
</feature>
<feature type="helix" evidence="4">
    <location>
        <begin position="161"/>
        <end position="167"/>
    </location>
</feature>
<feature type="helix" evidence="4">
    <location>
        <begin position="168"/>
        <end position="185"/>
    </location>
</feature>
<feature type="helix" evidence="4">
    <location>
        <begin position="192"/>
        <end position="195"/>
    </location>
</feature>
<feature type="helix" evidence="4">
    <location>
        <begin position="196"/>
        <end position="204"/>
    </location>
</feature>
<feature type="helix" evidence="4">
    <location>
        <begin position="210"/>
        <end position="216"/>
    </location>
</feature>
<feature type="helix" evidence="4">
    <location>
        <begin position="218"/>
        <end position="227"/>
    </location>
</feature>
<feature type="turn" evidence="4">
    <location>
        <begin position="228"/>
        <end position="232"/>
    </location>
</feature>
<proteinExistence type="evidence at protein level"/>
<name>PEBS_BPPRM</name>
<reference key="1">
    <citation type="journal article" date="2005" name="PLoS Biol.">
        <title>Three Prochlorococcus cyanophage genomes: signature features and ecological interpretations.</title>
        <authorList>
            <person name="Sullivan M.B."/>
            <person name="Coleman M.L."/>
            <person name="Weigele P."/>
            <person name="Rohwer F."/>
            <person name="Chisholm S.W."/>
        </authorList>
    </citation>
    <scope>NUCLEOTIDE SEQUENCE [GENOMIC DNA]</scope>
</reference>
<reference key="2">
    <citation type="journal article" date="2008" name="Curr. Biol.">
        <title>Efficient phage-mediated pigment biosynthesis in oceanic cyanobacteria.</title>
        <authorList>
            <person name="Dammeyer T."/>
            <person name="Bagby S.C."/>
            <person name="Sullivan M.B."/>
            <person name="Chisholm S.W."/>
            <person name="Frankenberg-Dinkel N."/>
        </authorList>
    </citation>
    <scope>CATALYTIC ACTIVITY</scope>
    <scope>CHARACTERIZATION</scope>
</reference>
<gene>
    <name type="primary">pebS</name>
    <name type="ORF">PSSM2_058</name>
</gene>
<evidence type="ECO:0000269" key="1">
    <source>
    </source>
</evidence>
<evidence type="ECO:0000305" key="2"/>
<evidence type="ECO:0007829" key="3">
    <source>
        <dbReference type="PDB" id="2VCK"/>
    </source>
</evidence>
<evidence type="ECO:0007829" key="4">
    <source>
        <dbReference type="PDB" id="2VCL"/>
    </source>
</evidence>
<dbReference type="EC" id="1.3.7.6"/>
<dbReference type="EMBL" id="AY939844">
    <property type="protein sequence ID" value="AAX44436.1"/>
    <property type="molecule type" value="Genomic_DNA"/>
</dbReference>
<dbReference type="RefSeq" id="YP_214290.1">
    <property type="nucleotide sequence ID" value="NC_006883.2"/>
</dbReference>
<dbReference type="PDB" id="2VCK">
    <property type="method" value="X-ray"/>
    <property type="resolution" value="1.80 A"/>
    <property type="chains" value="A/B/C/D=1-233"/>
</dbReference>
<dbReference type="PDB" id="2VCL">
    <property type="method" value="X-ray"/>
    <property type="resolution" value="1.55 A"/>
    <property type="chains" value="A=1-233"/>
</dbReference>
<dbReference type="PDB" id="2VGR">
    <property type="method" value="X-ray"/>
    <property type="resolution" value="2.10 A"/>
    <property type="chains" value="A/B/C/D=1-233"/>
</dbReference>
<dbReference type="PDB" id="2X9I">
    <property type="method" value="X-ray"/>
    <property type="resolution" value="2.20 A"/>
    <property type="chains" value="A/B/C/D=1-233"/>
</dbReference>
<dbReference type="PDB" id="2X9J">
    <property type="method" value="X-ray"/>
    <property type="resolution" value="1.85 A"/>
    <property type="chains" value="A/B=1-233"/>
</dbReference>
<dbReference type="PDBsum" id="2VCK"/>
<dbReference type="PDBsum" id="2VCL"/>
<dbReference type="PDBsum" id="2VGR"/>
<dbReference type="PDBsum" id="2X9I"/>
<dbReference type="PDBsum" id="2X9J"/>
<dbReference type="SMR" id="Q58MU6"/>
<dbReference type="GeneID" id="3294481"/>
<dbReference type="KEGG" id="vg:3294481"/>
<dbReference type="OrthoDB" id="14549at10239"/>
<dbReference type="BRENDA" id="1.3.7.6">
    <property type="organism ID" value="10990"/>
</dbReference>
<dbReference type="EvolutionaryTrace" id="Q58MU6"/>
<dbReference type="Proteomes" id="UP000000991">
    <property type="component" value="Genome"/>
</dbReference>
<dbReference type="GO" id="GO:0050897">
    <property type="term" value="F:cobalt ion binding"/>
    <property type="evidence" value="ECO:0007669"/>
    <property type="project" value="InterPro"/>
</dbReference>
<dbReference type="GO" id="GO:0016636">
    <property type="term" value="F:oxidoreductase activity, acting on the CH-CH group of donors, iron-sulfur protein as acceptor"/>
    <property type="evidence" value="ECO:0007669"/>
    <property type="project" value="InterPro"/>
</dbReference>
<dbReference type="GO" id="GO:0010024">
    <property type="term" value="P:phytochromobilin biosynthetic process"/>
    <property type="evidence" value="ECO:0007669"/>
    <property type="project" value="InterPro"/>
</dbReference>
<dbReference type="Gene3D" id="3.40.1500.20">
    <property type="match status" value="1"/>
</dbReference>
<dbReference type="InterPro" id="IPR009249">
    <property type="entry name" value="Ferredoxin-dep_bilin_Rdtase"/>
</dbReference>
<dbReference type="PANTHER" id="PTHR34557">
    <property type="entry name" value="PHYTOCHROMOBILIN:FERREDOXIN OXIDOREDUCTASE, CHLOROPLASTIC"/>
    <property type="match status" value="1"/>
</dbReference>
<dbReference type="PANTHER" id="PTHR34557:SF1">
    <property type="entry name" value="PHYTOCHROMOBILIN:FERREDOXIN OXIDOREDUCTASE, CHLOROPLASTIC"/>
    <property type="match status" value="1"/>
</dbReference>
<dbReference type="Pfam" id="PF05996">
    <property type="entry name" value="Fe_bilin_red"/>
    <property type="match status" value="1"/>
</dbReference>
<accession>Q58MU6</accession>